<evidence type="ECO:0000255" key="1">
    <source>
        <dbReference type="HAMAP-Rule" id="MF_00361"/>
    </source>
</evidence>
<keyword id="KW-0067">ATP-binding</keyword>
<keyword id="KW-0963">Cytoplasm</keyword>
<keyword id="KW-0418">Kinase</keyword>
<keyword id="KW-0520">NAD</keyword>
<keyword id="KW-0521">NADP</keyword>
<keyword id="KW-0547">Nucleotide-binding</keyword>
<keyword id="KW-1185">Reference proteome</keyword>
<keyword id="KW-0808">Transferase</keyword>
<proteinExistence type="inferred from homology"/>
<protein>
    <recommendedName>
        <fullName evidence="1">NAD kinase</fullName>
        <ecNumber evidence="1">2.7.1.23</ecNumber>
    </recommendedName>
    <alternativeName>
        <fullName evidence="1">ATP-dependent NAD kinase</fullName>
    </alternativeName>
</protein>
<name>NADK_ACIF2</name>
<comment type="function">
    <text evidence="1">Involved in the regulation of the intracellular balance of NAD and NADP, and is a key enzyme in the biosynthesis of NADP. Catalyzes specifically the phosphorylation on 2'-hydroxyl of the adenosine moiety of NAD to yield NADP.</text>
</comment>
<comment type="catalytic activity">
    <reaction evidence="1">
        <text>NAD(+) + ATP = ADP + NADP(+) + H(+)</text>
        <dbReference type="Rhea" id="RHEA:18629"/>
        <dbReference type="ChEBI" id="CHEBI:15378"/>
        <dbReference type="ChEBI" id="CHEBI:30616"/>
        <dbReference type="ChEBI" id="CHEBI:57540"/>
        <dbReference type="ChEBI" id="CHEBI:58349"/>
        <dbReference type="ChEBI" id="CHEBI:456216"/>
        <dbReference type="EC" id="2.7.1.23"/>
    </reaction>
</comment>
<comment type="cofactor">
    <cofactor evidence="1">
        <name>a divalent metal cation</name>
        <dbReference type="ChEBI" id="CHEBI:60240"/>
    </cofactor>
</comment>
<comment type="subcellular location">
    <subcellularLocation>
        <location evidence="1">Cytoplasm</location>
    </subcellularLocation>
</comment>
<comment type="similarity">
    <text evidence="1">Belongs to the NAD kinase family.</text>
</comment>
<gene>
    <name evidence="1" type="primary">nadK</name>
    <name type="ordered locus">AFE_0451</name>
</gene>
<feature type="chain" id="PRO_1000120830" description="NAD kinase">
    <location>
        <begin position="1"/>
        <end position="295"/>
    </location>
</feature>
<feature type="active site" description="Proton acceptor" evidence="1">
    <location>
        <position position="74"/>
    </location>
</feature>
<feature type="binding site" evidence="1">
    <location>
        <begin position="74"/>
        <end position="75"/>
    </location>
    <ligand>
        <name>NAD(+)</name>
        <dbReference type="ChEBI" id="CHEBI:57540"/>
    </ligand>
</feature>
<feature type="binding site" evidence="1">
    <location>
        <begin position="148"/>
        <end position="149"/>
    </location>
    <ligand>
        <name>NAD(+)</name>
        <dbReference type="ChEBI" id="CHEBI:57540"/>
    </ligand>
</feature>
<feature type="binding site" evidence="1">
    <location>
        <position position="176"/>
    </location>
    <ligand>
        <name>NAD(+)</name>
        <dbReference type="ChEBI" id="CHEBI:57540"/>
    </ligand>
</feature>
<feature type="binding site" evidence="1">
    <location>
        <position position="178"/>
    </location>
    <ligand>
        <name>NAD(+)</name>
        <dbReference type="ChEBI" id="CHEBI:57540"/>
    </ligand>
</feature>
<feature type="binding site" evidence="1">
    <location>
        <begin position="189"/>
        <end position="194"/>
    </location>
    <ligand>
        <name>NAD(+)</name>
        <dbReference type="ChEBI" id="CHEBI:57540"/>
    </ligand>
</feature>
<organism>
    <name type="scientific">Acidithiobacillus ferrooxidans (strain ATCC 23270 / DSM 14882 / CIP 104768 / NCIMB 8455)</name>
    <name type="common">Ferrobacillus ferrooxidans (strain ATCC 23270)</name>
    <dbReference type="NCBI Taxonomy" id="243159"/>
    <lineage>
        <taxon>Bacteria</taxon>
        <taxon>Pseudomonadati</taxon>
        <taxon>Pseudomonadota</taxon>
        <taxon>Acidithiobacillia</taxon>
        <taxon>Acidithiobacillales</taxon>
        <taxon>Acidithiobacillaceae</taxon>
        <taxon>Acidithiobacillus</taxon>
    </lineage>
</organism>
<reference key="1">
    <citation type="journal article" date="2008" name="BMC Genomics">
        <title>Acidithiobacillus ferrooxidans metabolism: from genome sequence to industrial applications.</title>
        <authorList>
            <person name="Valdes J."/>
            <person name="Pedroso I."/>
            <person name="Quatrini R."/>
            <person name="Dodson R.J."/>
            <person name="Tettelin H."/>
            <person name="Blake R. II"/>
            <person name="Eisen J.A."/>
            <person name="Holmes D.S."/>
        </authorList>
    </citation>
    <scope>NUCLEOTIDE SEQUENCE [LARGE SCALE GENOMIC DNA]</scope>
    <source>
        <strain>ATCC 23270 / DSM 14882 / CIP 104768 / NCIMB 8455</strain>
    </source>
</reference>
<dbReference type="EC" id="2.7.1.23" evidence="1"/>
<dbReference type="EMBL" id="CP001219">
    <property type="protein sequence ID" value="ACK78828.1"/>
    <property type="molecule type" value="Genomic_DNA"/>
</dbReference>
<dbReference type="RefSeq" id="WP_012606559.1">
    <property type="nucleotide sequence ID" value="NC_011761.1"/>
</dbReference>
<dbReference type="SMR" id="B7J4J4"/>
<dbReference type="STRING" id="243159.AFE_0451"/>
<dbReference type="PaxDb" id="243159-AFE_0451"/>
<dbReference type="GeneID" id="65279822"/>
<dbReference type="KEGG" id="afr:AFE_0451"/>
<dbReference type="eggNOG" id="COG0061">
    <property type="taxonomic scope" value="Bacteria"/>
</dbReference>
<dbReference type="HOGENOM" id="CLU_008831_0_1_6"/>
<dbReference type="Proteomes" id="UP000001362">
    <property type="component" value="Chromosome"/>
</dbReference>
<dbReference type="GO" id="GO:0005737">
    <property type="term" value="C:cytoplasm"/>
    <property type="evidence" value="ECO:0007669"/>
    <property type="project" value="UniProtKB-SubCell"/>
</dbReference>
<dbReference type="GO" id="GO:0005524">
    <property type="term" value="F:ATP binding"/>
    <property type="evidence" value="ECO:0007669"/>
    <property type="project" value="UniProtKB-KW"/>
</dbReference>
<dbReference type="GO" id="GO:0046872">
    <property type="term" value="F:metal ion binding"/>
    <property type="evidence" value="ECO:0007669"/>
    <property type="project" value="UniProtKB-UniRule"/>
</dbReference>
<dbReference type="GO" id="GO:0051287">
    <property type="term" value="F:NAD binding"/>
    <property type="evidence" value="ECO:0007669"/>
    <property type="project" value="UniProtKB-ARBA"/>
</dbReference>
<dbReference type="GO" id="GO:0003951">
    <property type="term" value="F:NAD+ kinase activity"/>
    <property type="evidence" value="ECO:0007669"/>
    <property type="project" value="UniProtKB-UniRule"/>
</dbReference>
<dbReference type="GO" id="GO:0019674">
    <property type="term" value="P:NAD metabolic process"/>
    <property type="evidence" value="ECO:0007669"/>
    <property type="project" value="InterPro"/>
</dbReference>
<dbReference type="GO" id="GO:0006741">
    <property type="term" value="P:NADP biosynthetic process"/>
    <property type="evidence" value="ECO:0007669"/>
    <property type="project" value="UniProtKB-UniRule"/>
</dbReference>
<dbReference type="Gene3D" id="3.40.50.10330">
    <property type="entry name" value="Probable inorganic polyphosphate/atp-NAD kinase, domain 1"/>
    <property type="match status" value="1"/>
</dbReference>
<dbReference type="Gene3D" id="2.60.200.30">
    <property type="entry name" value="Probable inorganic polyphosphate/atp-NAD kinase, domain 2"/>
    <property type="match status" value="1"/>
</dbReference>
<dbReference type="HAMAP" id="MF_00361">
    <property type="entry name" value="NAD_kinase"/>
    <property type="match status" value="1"/>
</dbReference>
<dbReference type="InterPro" id="IPR017438">
    <property type="entry name" value="ATP-NAD_kinase_N"/>
</dbReference>
<dbReference type="InterPro" id="IPR017437">
    <property type="entry name" value="ATP-NAD_kinase_PpnK-typ_C"/>
</dbReference>
<dbReference type="InterPro" id="IPR016064">
    <property type="entry name" value="NAD/diacylglycerol_kinase_sf"/>
</dbReference>
<dbReference type="InterPro" id="IPR002504">
    <property type="entry name" value="NADK"/>
</dbReference>
<dbReference type="PANTHER" id="PTHR20275">
    <property type="entry name" value="NAD KINASE"/>
    <property type="match status" value="1"/>
</dbReference>
<dbReference type="PANTHER" id="PTHR20275:SF0">
    <property type="entry name" value="NAD KINASE"/>
    <property type="match status" value="1"/>
</dbReference>
<dbReference type="Pfam" id="PF01513">
    <property type="entry name" value="NAD_kinase"/>
    <property type="match status" value="1"/>
</dbReference>
<dbReference type="Pfam" id="PF20143">
    <property type="entry name" value="NAD_kinase_C"/>
    <property type="match status" value="1"/>
</dbReference>
<dbReference type="SUPFAM" id="SSF111331">
    <property type="entry name" value="NAD kinase/diacylglycerol kinase-like"/>
    <property type="match status" value="1"/>
</dbReference>
<accession>B7J4J4</accession>
<sequence>MTQPFQRVLLVSKYHDPSVLPGLRQLRDFLLARDMPTFLESQSAADIGDSLGLPLLSFAEADAGSDLVIALGGDGTLLGTARQTAQSGIPILGINQGRLGFLADLSIHQISEALPPILEGHYQQDLRSILHAELWRSEERVHTGLAVNEVFIHKGGGESMIELQVQMDGRFVYTQRADGLIIATPTGSTAYAMSAGGPILTPTLAALLLVLICPHTLTARPLAVADSVEIVARLTASRQSAALSLDSHCSVPLEIGDEIVIRRASCAARFIHPEEENFFQILRGKLHWADSPGTD</sequence>